<name>GB_HSV2S</name>
<feature type="signal peptide" evidence="1">
    <location>
        <begin position="1"/>
        <end position="34"/>
    </location>
</feature>
<feature type="chain" id="PRO_0000038166" description="Envelope glycoprotein B" evidence="1">
    <location>
        <begin position="35"/>
        <end position="885"/>
    </location>
</feature>
<feature type="topological domain" description="Virion surface" evidence="1">
    <location>
        <begin position="35"/>
        <end position="759"/>
    </location>
</feature>
<feature type="transmembrane region" description="Helical" evidence="1">
    <location>
        <begin position="760"/>
        <end position="780"/>
    </location>
</feature>
<feature type="topological domain" description="Intravirion" evidence="1">
    <location>
        <begin position="781"/>
        <end position="885"/>
    </location>
</feature>
<feature type="region of interest" description="Disordered" evidence="2">
    <location>
        <begin position="29"/>
        <end position="74"/>
    </location>
</feature>
<feature type="region of interest" description="Involved in fusion and/or binding to host membrane" evidence="1">
    <location>
        <begin position="154"/>
        <end position="160"/>
    </location>
</feature>
<feature type="region of interest" description="Involved in fusion and/or binding to host membrane" evidence="1">
    <location>
        <begin position="239"/>
        <end position="246"/>
    </location>
</feature>
<feature type="region of interest" description="Disordered" evidence="2">
    <location>
        <begin position="455"/>
        <end position="478"/>
    </location>
</feature>
<feature type="region of interest" description="Hydrophobic membrane proximal region" evidence="1">
    <location>
        <begin position="704"/>
        <end position="757"/>
    </location>
</feature>
<feature type="region of interest" description="Hydrophobic membrane proximal region">
    <location>
        <begin position="716"/>
        <end position="756"/>
    </location>
</feature>
<feature type="region of interest" description="Disordered" evidence="2">
    <location>
        <begin position="866"/>
        <end position="885"/>
    </location>
</feature>
<feature type="short sequence motif" description="Golgi targeting" evidence="1">
    <location>
        <begin position="834"/>
        <end position="837"/>
    </location>
</feature>
<feature type="short sequence motif" description="Internalization motif" evidence="1">
    <location>
        <begin position="874"/>
        <end position="877"/>
    </location>
</feature>
<feature type="compositionally biased region" description="Low complexity" evidence="2">
    <location>
        <begin position="29"/>
        <end position="46"/>
    </location>
</feature>
<feature type="compositionally biased region" description="Acidic residues" evidence="2">
    <location>
        <begin position="47"/>
        <end position="58"/>
    </location>
</feature>
<feature type="glycosylation site" description="N-linked (GlcNAc...) asparagine; by host" evidence="1">
    <location>
        <position position="68"/>
    </location>
</feature>
<feature type="glycosylation site" description="N-linked (GlcNAc...) asparagine; by host" evidence="1">
    <location>
        <position position="122"/>
    </location>
</feature>
<feature type="glycosylation site" description="N-linked (GlcNAc...) asparagine; by host" evidence="1">
    <location>
        <position position="379"/>
    </location>
</feature>
<feature type="glycosylation site" description="N-linked (GlcNAc...) asparagine; by host" evidence="1">
    <location>
        <position position="411"/>
    </location>
</feature>
<feature type="glycosylation site" description="N-linked (GlcNAc...) asparagine; by host" evidence="1">
    <location>
        <position position="659"/>
    </location>
</feature>
<feature type="disulfide bond" evidence="1">
    <location>
        <begin position="97"/>
        <end position="558"/>
    </location>
</feature>
<feature type="disulfide bond" evidence="1">
    <location>
        <begin position="114"/>
        <end position="514"/>
    </location>
</feature>
<feature type="disulfide bond" evidence="1">
    <location>
        <begin position="188"/>
        <end position="252"/>
    </location>
</feature>
<feature type="disulfide bond" evidence="1">
    <location>
        <begin position="345"/>
        <end position="393"/>
    </location>
</feature>
<feature type="disulfide bond" evidence="1">
    <location>
        <begin position="581"/>
        <end position="618"/>
    </location>
</feature>
<organism>
    <name type="scientific">Herpes simplex virus type 2 (strain SA8)</name>
    <name type="common">Simian agent 8</name>
    <dbReference type="NCBI Taxonomy" id="10316"/>
    <lineage>
        <taxon>Viruses</taxon>
        <taxon>Duplodnaviria</taxon>
        <taxon>Heunggongvirae</taxon>
        <taxon>Peploviricota</taxon>
        <taxon>Herviviricetes</taxon>
        <taxon>Herpesvirales</taxon>
        <taxon>Orthoherpesviridae</taxon>
        <taxon>Alphaherpesvirinae</taxon>
        <taxon>Simplexvirus</taxon>
        <taxon>Simplexvirus humanalpha2</taxon>
        <taxon>Human herpesvirus 2</taxon>
    </lineage>
</organism>
<reference key="1">
    <citation type="journal article" date="1991" name="J. Gen. Virol.">
        <title>Conserved domains of glycoprotein B (gB) of the monkey virus, simian agent 8, identified by comparison with herpesvirus gBs.</title>
        <authorList>
            <person name="Borchers K."/>
            <person name="Weigelt W."/>
            <person name="Buhk H.-J."/>
            <person name="Ludwig H."/>
            <person name="Mankertz J."/>
        </authorList>
    </citation>
    <scope>NUCLEOTIDE SEQUENCE [GENOMIC DNA]</scope>
    <source>
        <strain>B264</strain>
    </source>
</reference>
<evidence type="ECO:0000255" key="1">
    <source>
        <dbReference type="HAMAP-Rule" id="MF_04032"/>
    </source>
</evidence>
<evidence type="ECO:0000256" key="2">
    <source>
        <dbReference type="SAM" id="MobiDB-lite"/>
    </source>
</evidence>
<accession>P24994</accession>
<gene>
    <name evidence="1" type="primary">gB</name>
    <name type="ORF">UL27</name>
</gene>
<proteinExistence type="inferred from homology"/>
<organismHost>
    <name type="scientific">Homo sapiens</name>
    <name type="common">Human</name>
    <dbReference type="NCBI Taxonomy" id="9606"/>
</organismHost>
<keyword id="KW-1015">Disulfide bond</keyword>
<keyword id="KW-0325">Glycoprotein</keyword>
<keyword id="KW-1032">Host cell membrane</keyword>
<keyword id="KW-1039">Host endosome</keyword>
<keyword id="KW-1040">Host Golgi apparatus</keyword>
<keyword id="KW-1043">Host membrane</keyword>
<keyword id="KW-0945">Host-virus interaction</keyword>
<keyword id="KW-0472">Membrane</keyword>
<keyword id="KW-0732">Signal</keyword>
<keyword id="KW-0812">Transmembrane</keyword>
<keyword id="KW-1133">Transmembrane helix</keyword>
<keyword id="KW-1161">Viral attachment to host cell</keyword>
<keyword id="KW-0261">Viral envelope protein</keyword>
<keyword id="KW-0946">Virion</keyword>
<keyword id="KW-1160">Virus entry into host cell</keyword>
<sequence length="885" mass="97812">MRPRGTPPSFLPLPVLLALAVIAAAGRAAPAAAAAPTADPAATPALPEDEEVPDEDGEGVATPAPAANASVEAGRATLREDLREIKARDGDATFYVCPPPTGATVVQFEQPRPCPRAPDGQNYTEGIAVVFKENIAPYKFKATMYYKDVTVSQVWFGHRYSQFMGIFEDRAPVPFEEVMDKINAKGVCRSTAKYVRNNMESTAFHRDDHESDMALKPAKAATRTSRGWHTTDLKYNPARVEAFHRYGTTVNCIVEEVEARSVYPYDEFVLATGDFVYMSPFYGYRDGSHGEHTAYAADRFRQVDGYYERDLSTGRRAAAPVTRNLLTTPKFTVGWDWAPKRPSVCTLTKWREVDEMLRAEYGPSFRFSSAALSTTFTANRTEYALSRVDLADCVGREAREAVDRIFLRRYNGTHVKVGQVQYYLATGGFLIAYQPLLSNALVELYVRELVREQTRRPAGGDPGEAATPGPSVDPPSVERIKTTSSVEFARLQFTYDHIQRHVNDMLGRIATAWCELQNRELTLWNEARRLNPGAIASATVGRRVSARMLGDVMAVSTCVPVAPDNVIMQNSIGVAARPGTCYSRPLVSFRYEADGPLVEGQLGEDNEIRLERDALEPCTVGHRRYFTFGAGYVYFEEYAYSHQLGRADVTTVSTFINLNLTMLEDHEFVPLEVYTRQEIKDSGLLDYTEVQRRNQLHALRFADIDTVIKADAHAALFAGLYSFFEGLGDVGRAVGKVVMGIVGGVVSAVSGVSSFLSNPFGALAVGLLVLAGLAAAFFAFRYVMRLQRNPMKALYPLTTKELKSDGAPLAGGGEDGAEDFDEAKLAQAREMIRYMALVSAMERTEHKARKKGTSALLSAKVTDAVMRKRARPRYSPLRDTDEEEL</sequence>
<protein>
    <recommendedName>
        <fullName evidence="1">Envelope glycoprotein B</fullName>
        <shortName evidence="1">gB</shortName>
    </recommendedName>
</protein>
<dbReference type="EMBL" id="X56935">
    <property type="protein sequence ID" value="CAA40256.1"/>
    <property type="molecule type" value="Genomic_DNA"/>
</dbReference>
<dbReference type="SMR" id="P24994"/>
<dbReference type="GlyCosmos" id="P24994">
    <property type="glycosylation" value="5 sites, No reported glycans"/>
</dbReference>
<dbReference type="GO" id="GO:0044175">
    <property type="term" value="C:host cell endosome membrane"/>
    <property type="evidence" value="ECO:0007669"/>
    <property type="project" value="UniProtKB-SubCell"/>
</dbReference>
<dbReference type="GO" id="GO:0044178">
    <property type="term" value="C:host cell Golgi membrane"/>
    <property type="evidence" value="ECO:0007669"/>
    <property type="project" value="UniProtKB-SubCell"/>
</dbReference>
<dbReference type="GO" id="GO:0020002">
    <property type="term" value="C:host cell plasma membrane"/>
    <property type="evidence" value="ECO:0007669"/>
    <property type="project" value="UniProtKB-SubCell"/>
</dbReference>
<dbReference type="GO" id="GO:0016020">
    <property type="term" value="C:membrane"/>
    <property type="evidence" value="ECO:0007669"/>
    <property type="project" value="UniProtKB-KW"/>
</dbReference>
<dbReference type="GO" id="GO:0019031">
    <property type="term" value="C:viral envelope"/>
    <property type="evidence" value="ECO:0007669"/>
    <property type="project" value="UniProtKB-KW"/>
</dbReference>
<dbReference type="GO" id="GO:0055036">
    <property type="term" value="C:virion membrane"/>
    <property type="evidence" value="ECO:0007669"/>
    <property type="project" value="UniProtKB-SubCell"/>
</dbReference>
<dbReference type="GO" id="GO:0046718">
    <property type="term" value="P:symbiont entry into host cell"/>
    <property type="evidence" value="ECO:0007669"/>
    <property type="project" value="UniProtKB-KW"/>
</dbReference>
<dbReference type="GO" id="GO:0019062">
    <property type="term" value="P:virion attachment to host cell"/>
    <property type="evidence" value="ECO:0007669"/>
    <property type="project" value="UniProtKB-KW"/>
</dbReference>
<dbReference type="FunFam" id="1.20.5.1890:FF:000001">
    <property type="entry name" value="Envelope glycoprotein B"/>
    <property type="match status" value="1"/>
</dbReference>
<dbReference type="FunFam" id="2.30.30.1230:FF:000001">
    <property type="entry name" value="Envelope glycoprotein B"/>
    <property type="match status" value="1"/>
</dbReference>
<dbReference type="FunFam" id="6.10.250.3280:FF:000001">
    <property type="entry name" value="Envelope glycoprotein B"/>
    <property type="match status" value="1"/>
</dbReference>
<dbReference type="Gene3D" id="1.20.5.1890">
    <property type="match status" value="1"/>
</dbReference>
<dbReference type="Gene3D" id="2.30.29.100">
    <property type="match status" value="1"/>
</dbReference>
<dbReference type="Gene3D" id="2.30.30.1230">
    <property type="match status" value="1"/>
</dbReference>
<dbReference type="Gene3D" id="6.10.250.3280">
    <property type="match status" value="1"/>
</dbReference>
<dbReference type="HAMAP" id="MF_04032">
    <property type="entry name" value="HSV_GB"/>
    <property type="match status" value="1"/>
</dbReference>
<dbReference type="InterPro" id="IPR035377">
    <property type="entry name" value="Glycoprot_B_PH1"/>
</dbReference>
<dbReference type="InterPro" id="IPR035381">
    <property type="entry name" value="Glycoprot_B_PH2"/>
</dbReference>
<dbReference type="InterPro" id="IPR038631">
    <property type="entry name" value="Glycoprot_B_PH2_sf"/>
</dbReference>
<dbReference type="InterPro" id="IPR055341">
    <property type="entry name" value="Glycoprotein_B_ecto_C"/>
</dbReference>
<dbReference type="InterPro" id="IPR000234">
    <property type="entry name" value="Herpes_Glycoprot_B"/>
</dbReference>
<dbReference type="Pfam" id="PF17416">
    <property type="entry name" value="Glycoprot_B_PH1"/>
    <property type="match status" value="1"/>
</dbReference>
<dbReference type="Pfam" id="PF17417">
    <property type="entry name" value="Glycoprot_B_PH2"/>
    <property type="match status" value="1"/>
</dbReference>
<dbReference type="Pfam" id="PF00606">
    <property type="entry name" value="Glycoprotein_B"/>
    <property type="match status" value="1"/>
</dbReference>
<dbReference type="SUPFAM" id="SSF161008">
    <property type="entry name" value="Viral glycoprotein ectodomain-like"/>
    <property type="match status" value="1"/>
</dbReference>
<comment type="function">
    <text evidence="1">Envelope glycoprotein that forms spikes at the surface of virion envelope. Essential for the initial attachment to heparan sulfate moieties of the host cell surface proteoglycans. Involved in fusion of viral and cellular membranes leading to virus entry into the host cell. Following initial binding to its host receptors, membrane fusion is mediated by the fusion machinery composed at least of gB and the heterodimer gH/gL. May be involved in the fusion between the virion envelope and the outer nuclear membrane during virion egress.</text>
</comment>
<comment type="subunit">
    <text evidence="1">Homotrimer; disulfide-linked. Binds to heparan sulfate proteoglycans. Interacts with gH/gL heterodimer.</text>
</comment>
<comment type="subcellular location">
    <subcellularLocation>
        <location evidence="1">Virion membrane</location>
        <topology evidence="1">Single-pass type I membrane protein</topology>
    </subcellularLocation>
    <subcellularLocation>
        <location evidence="1">Host cell membrane</location>
        <topology evidence="1">Single-pass type I membrane protein</topology>
    </subcellularLocation>
    <subcellularLocation>
        <location evidence="1">Host endosome membrane</location>
        <topology evidence="1">Single-pass type I membrane protein</topology>
    </subcellularLocation>
    <subcellularLocation>
        <location evidence="1">Host Golgi apparatus membrane</location>
        <topology evidence="1">Single-pass type I membrane protein</topology>
    </subcellularLocation>
    <text evidence="1">During virion morphogenesis, this protein probably accumulates in the endosomes and trans-Golgi where secondary envelopment occurs. It is probably transported to the cell surface from where it is endocytosed and directed to the trans-Golgi network (TGN).</text>
</comment>
<comment type="similarity">
    <text evidence="1">Belongs to the herpesviridae glycoprotein B family.</text>
</comment>